<evidence type="ECO:0000250" key="1">
    <source>
        <dbReference type="UniProtKB" id="Q68FE2"/>
    </source>
</evidence>
<evidence type="ECO:0000250" key="2">
    <source>
        <dbReference type="UniProtKB" id="Q7Z3C6"/>
    </source>
</evidence>
<evidence type="ECO:0000255" key="3"/>
<evidence type="ECO:0000256" key="4">
    <source>
        <dbReference type="SAM" id="MobiDB-lite"/>
    </source>
</evidence>
<evidence type="ECO:0000269" key="5">
    <source>
    </source>
</evidence>
<evidence type="ECO:0000269" key="6">
    <source>
    </source>
</evidence>
<evidence type="ECO:0000269" key="7">
    <source>
    </source>
</evidence>
<evidence type="ECO:0000303" key="8">
    <source>
    </source>
</evidence>
<evidence type="ECO:0000303" key="9">
    <source>
    </source>
</evidence>
<evidence type="ECO:0000303" key="10">
    <source>
    </source>
</evidence>
<evidence type="ECO:0000303" key="11">
    <source>
    </source>
</evidence>
<evidence type="ECO:0000305" key="12"/>
<proteinExistence type="evidence at protein level"/>
<dbReference type="EMBL" id="AY515311">
    <property type="protein sequence ID" value="AAS87212.1"/>
    <property type="molecule type" value="mRNA"/>
</dbReference>
<dbReference type="EMBL" id="AY316116">
    <property type="protein sequence ID" value="AAQ86941.1"/>
    <property type="status" value="ALT_INIT"/>
    <property type="molecule type" value="mRNA"/>
</dbReference>
<dbReference type="EMBL" id="AK096734">
    <property type="protein sequence ID" value="BAC04853.1"/>
    <property type="molecule type" value="mRNA"/>
</dbReference>
<dbReference type="EMBL" id="AC010973">
    <property type="status" value="NOT_ANNOTATED_CDS"/>
    <property type="molecule type" value="Genomic_DNA"/>
</dbReference>
<dbReference type="EMBL" id="BC128587">
    <property type="protein sequence ID" value="AAI28588.1"/>
    <property type="molecule type" value="mRNA"/>
</dbReference>
<dbReference type="EMBL" id="BK004019">
    <property type="protein sequence ID" value="DAA05200.1"/>
    <property type="molecule type" value="mRNA"/>
</dbReference>
<dbReference type="CCDS" id="CCDS83242.1">
    <molecule id="Q674R7-1"/>
</dbReference>
<dbReference type="RefSeq" id="NP_001303985.1">
    <molecule id="Q674R7-1"/>
    <property type="nucleotide sequence ID" value="NM_001317056.2"/>
</dbReference>
<dbReference type="RefSeq" id="XP_011514367.3">
    <molecule id="Q674R7-1"/>
    <property type="nucleotide sequence ID" value="XM_011516065.3"/>
</dbReference>
<dbReference type="RefSeq" id="XP_011514368.1">
    <property type="nucleotide sequence ID" value="XM_011516066.2"/>
</dbReference>
<dbReference type="RefSeq" id="XP_054213914.1">
    <molecule id="Q674R7-1"/>
    <property type="nucleotide sequence ID" value="XM_054357939.1"/>
</dbReference>
<dbReference type="PDB" id="8POE">
    <property type="method" value="EM"/>
    <property type="resolution" value="4.20 A"/>
    <property type="chains" value="A/B/C=2-924"/>
</dbReference>
<dbReference type="PDBsum" id="8POE"/>
<dbReference type="EMDB" id="EMD-17789"/>
<dbReference type="EMDB" id="EMD-17790"/>
<dbReference type="SMR" id="Q674R7"/>
<dbReference type="BioGRID" id="130263">
    <property type="interactions" value="30"/>
</dbReference>
<dbReference type="FunCoup" id="Q674R7">
    <property type="interactions" value="837"/>
</dbReference>
<dbReference type="IntAct" id="Q674R7">
    <property type="interactions" value="12"/>
</dbReference>
<dbReference type="STRING" id="9606.ENSP00000491504"/>
<dbReference type="TCDB" id="9.A.15.2.1">
    <property type="family name" value="the autophagy-related phagophore-formation transporter (apt) family"/>
</dbReference>
<dbReference type="GlyGen" id="Q674R7">
    <property type="glycosylation" value="3 sites, 1 O-linked glycan (1 site)"/>
</dbReference>
<dbReference type="iPTMnet" id="Q674R7"/>
<dbReference type="PhosphoSitePlus" id="Q674R7"/>
<dbReference type="BioMuta" id="ATG9B"/>
<dbReference type="DMDM" id="74708555"/>
<dbReference type="MassIVE" id="Q674R7"/>
<dbReference type="PeptideAtlas" id="Q674R7"/>
<dbReference type="ProteomicsDB" id="65973">
    <molecule id="Q674R7-1"/>
</dbReference>
<dbReference type="ProteomicsDB" id="65974">
    <molecule id="Q674R7-2"/>
</dbReference>
<dbReference type="Antibodypedia" id="32933">
    <property type="antibodies" value="245 antibodies from 25 providers"/>
</dbReference>
<dbReference type="DNASU" id="285973"/>
<dbReference type="Ensembl" id="ENST00000469530.4">
    <molecule id="Q674R7-1"/>
    <property type="protein sequence ID" value="ENSP00000479879.1"/>
    <property type="gene ID" value="ENSG00000181652.20"/>
</dbReference>
<dbReference type="Ensembl" id="ENST00000605952.5">
    <molecule id="Q674R7-1"/>
    <property type="protein sequence ID" value="ENSP00000475737.2"/>
    <property type="gene ID" value="ENSG00000181652.20"/>
</dbReference>
<dbReference type="Ensembl" id="ENST00000639579.2">
    <molecule id="Q674R7-1"/>
    <property type="protein sequence ID" value="ENSP00000491504.1"/>
    <property type="gene ID" value="ENSG00000181652.20"/>
</dbReference>
<dbReference type="GeneID" id="285973"/>
<dbReference type="KEGG" id="hsa:285973"/>
<dbReference type="MANE-Select" id="ENST00000639579.2">
    <property type="protein sequence ID" value="ENSP00000491504.1"/>
    <property type="RefSeq nucleotide sequence ID" value="NM_001317056.2"/>
    <property type="RefSeq protein sequence ID" value="NP_001303985.1"/>
</dbReference>
<dbReference type="UCSC" id="uc064jfi.1">
    <molecule id="Q674R7-1"/>
    <property type="organism name" value="human"/>
</dbReference>
<dbReference type="AGR" id="HGNC:21899"/>
<dbReference type="CTD" id="285973"/>
<dbReference type="DisGeNET" id="285973"/>
<dbReference type="GeneCards" id="ATG9B"/>
<dbReference type="HGNC" id="HGNC:21899">
    <property type="gene designation" value="ATG9B"/>
</dbReference>
<dbReference type="HPA" id="ENSG00000181652">
    <property type="expression patterns" value="Tissue enhanced (esophagus, placenta)"/>
</dbReference>
<dbReference type="MIM" id="612205">
    <property type="type" value="gene"/>
</dbReference>
<dbReference type="neXtProt" id="NX_Q674R7"/>
<dbReference type="OpenTargets" id="ENSG00000181652"/>
<dbReference type="PharmGKB" id="PA134883165"/>
<dbReference type="VEuPathDB" id="HostDB:ENSG00000181652"/>
<dbReference type="GeneTree" id="ENSGT00390000014839"/>
<dbReference type="HOGENOM" id="CLU_006200_2_0_1"/>
<dbReference type="InParanoid" id="Q674R7"/>
<dbReference type="OMA" id="AQPCHSA"/>
<dbReference type="OrthoDB" id="2020634at2759"/>
<dbReference type="PAN-GO" id="Q674R7">
    <property type="GO annotations" value="5 GO annotations based on evolutionary models"/>
</dbReference>
<dbReference type="PhylomeDB" id="Q674R7"/>
<dbReference type="PathwayCommons" id="Q674R7"/>
<dbReference type="Reactome" id="R-HSA-1632852">
    <property type="pathway name" value="Macroautophagy"/>
</dbReference>
<dbReference type="SignaLink" id="Q674R7"/>
<dbReference type="SIGNOR" id="Q674R7"/>
<dbReference type="BioGRID-ORCS" id="285973">
    <property type="hits" value="8 hits in 250 CRISPR screens"/>
</dbReference>
<dbReference type="GenomeRNAi" id="285973"/>
<dbReference type="Pharos" id="Q674R7">
    <property type="development level" value="Tbio"/>
</dbReference>
<dbReference type="PRO" id="PR:Q674R7"/>
<dbReference type="Proteomes" id="UP000005640">
    <property type="component" value="Chromosome 7"/>
</dbReference>
<dbReference type="RNAct" id="Q674R7">
    <property type="molecule type" value="protein"/>
</dbReference>
<dbReference type="Bgee" id="ENSG00000181652">
    <property type="expression patterns" value="Expressed in lower esophagus mucosa and 114 other cell types or tissues"/>
</dbReference>
<dbReference type="GO" id="GO:0005776">
    <property type="term" value="C:autophagosome"/>
    <property type="evidence" value="ECO:0000318"/>
    <property type="project" value="GO_Central"/>
</dbReference>
<dbReference type="GO" id="GO:0005789">
    <property type="term" value="C:endoplasmic reticulum membrane"/>
    <property type="evidence" value="ECO:0000250"/>
    <property type="project" value="UniProtKB"/>
</dbReference>
<dbReference type="GO" id="GO:0000139">
    <property type="term" value="C:Golgi membrane"/>
    <property type="evidence" value="ECO:0000250"/>
    <property type="project" value="UniProtKB"/>
</dbReference>
<dbReference type="GO" id="GO:0000407">
    <property type="term" value="C:phagophore assembly site"/>
    <property type="evidence" value="ECO:0000318"/>
    <property type="project" value="GO_Central"/>
</dbReference>
<dbReference type="GO" id="GO:0034045">
    <property type="term" value="C:phagophore assembly site membrane"/>
    <property type="evidence" value="ECO:0007669"/>
    <property type="project" value="UniProtKB-SubCell"/>
</dbReference>
<dbReference type="GO" id="GO:0055038">
    <property type="term" value="C:recycling endosome membrane"/>
    <property type="evidence" value="ECO:0000250"/>
    <property type="project" value="UniProtKB"/>
</dbReference>
<dbReference type="GO" id="GO:0005802">
    <property type="term" value="C:trans-Golgi network"/>
    <property type="evidence" value="ECO:0000250"/>
    <property type="project" value="UniProtKB"/>
</dbReference>
<dbReference type="GO" id="GO:0017128">
    <property type="term" value="F:phospholipid scramblase activity"/>
    <property type="evidence" value="ECO:0000250"/>
    <property type="project" value="UniProtKB"/>
</dbReference>
<dbReference type="GO" id="GO:0000045">
    <property type="term" value="P:autophagosome assembly"/>
    <property type="evidence" value="ECO:0000314"/>
    <property type="project" value="MGI"/>
</dbReference>
<dbReference type="GO" id="GO:0060349">
    <property type="term" value="P:bone morphogenesis"/>
    <property type="evidence" value="ECO:0000250"/>
    <property type="project" value="UniProtKB"/>
</dbReference>
<dbReference type="GO" id="GO:0000423">
    <property type="term" value="P:mitophagy"/>
    <property type="evidence" value="ECO:0000318"/>
    <property type="project" value="GO_Central"/>
</dbReference>
<dbReference type="GO" id="GO:0034727">
    <property type="term" value="P:piecemeal microautophagy of the nucleus"/>
    <property type="evidence" value="ECO:0000318"/>
    <property type="project" value="GO_Central"/>
</dbReference>
<dbReference type="GO" id="GO:0097300">
    <property type="term" value="P:programmed necrotic cell death"/>
    <property type="evidence" value="ECO:0000250"/>
    <property type="project" value="UniProtKB"/>
</dbReference>
<dbReference type="GO" id="GO:0034497">
    <property type="term" value="P:protein localization to phagophore assembly site"/>
    <property type="evidence" value="ECO:0000318"/>
    <property type="project" value="GO_Central"/>
</dbReference>
<dbReference type="GO" id="GO:0061709">
    <property type="term" value="P:reticulophagy"/>
    <property type="evidence" value="ECO:0000318"/>
    <property type="project" value="GO_Central"/>
</dbReference>
<dbReference type="InterPro" id="IPR007241">
    <property type="entry name" value="Autophagy-rel_prot_9"/>
</dbReference>
<dbReference type="PANTHER" id="PTHR13038">
    <property type="entry name" value="APG9 AUTOPHAGY 9"/>
    <property type="match status" value="1"/>
</dbReference>
<dbReference type="PANTHER" id="PTHR13038:SF14">
    <property type="entry name" value="AUTOPHAGY-RELATED PROTEIN 9B"/>
    <property type="match status" value="1"/>
</dbReference>
<dbReference type="Pfam" id="PF04109">
    <property type="entry name" value="ATG9"/>
    <property type="match status" value="1"/>
</dbReference>
<reference key="1">
    <citation type="journal article" date="2004" name="J. Biol. Chem.">
        <title>Post-transcriptional regulation of endothelial nitric-oxide synthase by an overlapping antisense mRNA transcript.</title>
        <authorList>
            <person name="Robb G.B."/>
            <person name="Carson A.R."/>
            <person name="Tai S.C."/>
            <person name="Fish J.E."/>
            <person name="Singh S."/>
            <person name="Yamada T."/>
            <person name="Scherer S.W."/>
            <person name="Nakabayashi K."/>
            <person name="Marsden P.A."/>
        </authorList>
    </citation>
    <scope>NUCLEOTIDE SEQUENCE [MRNA] (ISOFORM 1)</scope>
    <scope>TISSUE SPECIFICITY</scope>
    <source>
        <tissue>Testis</tissue>
    </source>
</reference>
<reference key="2">
    <citation type="journal article" date="2004" name="Nat. Genet.">
        <title>Complete sequencing and characterization of 21,243 full-length human cDNAs.</title>
        <authorList>
            <person name="Ota T."/>
            <person name="Suzuki Y."/>
            <person name="Nishikawa T."/>
            <person name="Otsuki T."/>
            <person name="Sugiyama T."/>
            <person name="Irie R."/>
            <person name="Wakamatsu A."/>
            <person name="Hayashi K."/>
            <person name="Sato H."/>
            <person name="Nagai K."/>
            <person name="Kimura K."/>
            <person name="Makita H."/>
            <person name="Sekine M."/>
            <person name="Obayashi M."/>
            <person name="Nishi T."/>
            <person name="Shibahara T."/>
            <person name="Tanaka T."/>
            <person name="Ishii S."/>
            <person name="Yamamoto J."/>
            <person name="Saito K."/>
            <person name="Kawai Y."/>
            <person name="Isono Y."/>
            <person name="Nakamura Y."/>
            <person name="Nagahari K."/>
            <person name="Murakami K."/>
            <person name="Yasuda T."/>
            <person name="Iwayanagi T."/>
            <person name="Wagatsuma M."/>
            <person name="Shiratori A."/>
            <person name="Sudo H."/>
            <person name="Hosoiri T."/>
            <person name="Kaku Y."/>
            <person name="Kodaira H."/>
            <person name="Kondo H."/>
            <person name="Sugawara M."/>
            <person name="Takahashi M."/>
            <person name="Kanda K."/>
            <person name="Yokoi T."/>
            <person name="Furuya T."/>
            <person name="Kikkawa E."/>
            <person name="Omura Y."/>
            <person name="Abe K."/>
            <person name="Kamihara K."/>
            <person name="Katsuta N."/>
            <person name="Sato K."/>
            <person name="Tanikawa M."/>
            <person name="Yamazaki M."/>
            <person name="Ninomiya K."/>
            <person name="Ishibashi T."/>
            <person name="Yamashita H."/>
            <person name="Murakawa K."/>
            <person name="Fujimori K."/>
            <person name="Tanai H."/>
            <person name="Kimata M."/>
            <person name="Watanabe M."/>
            <person name="Hiraoka S."/>
            <person name="Chiba Y."/>
            <person name="Ishida S."/>
            <person name="Ono Y."/>
            <person name="Takiguchi S."/>
            <person name="Watanabe S."/>
            <person name="Yosida M."/>
            <person name="Hotuta T."/>
            <person name="Kusano J."/>
            <person name="Kanehori K."/>
            <person name="Takahashi-Fujii A."/>
            <person name="Hara H."/>
            <person name="Tanase T.-O."/>
            <person name="Nomura Y."/>
            <person name="Togiya S."/>
            <person name="Komai F."/>
            <person name="Hara R."/>
            <person name="Takeuchi K."/>
            <person name="Arita M."/>
            <person name="Imose N."/>
            <person name="Musashino K."/>
            <person name="Yuuki H."/>
            <person name="Oshima A."/>
            <person name="Sasaki N."/>
            <person name="Aotsuka S."/>
            <person name="Yoshikawa Y."/>
            <person name="Matsunawa H."/>
            <person name="Ichihara T."/>
            <person name="Shiohata N."/>
            <person name="Sano S."/>
            <person name="Moriya S."/>
            <person name="Momiyama H."/>
            <person name="Satoh N."/>
            <person name="Takami S."/>
            <person name="Terashima Y."/>
            <person name="Suzuki O."/>
            <person name="Nakagawa S."/>
            <person name="Senoh A."/>
            <person name="Mizoguchi H."/>
            <person name="Goto Y."/>
            <person name="Shimizu F."/>
            <person name="Wakebe H."/>
            <person name="Hishigaki H."/>
            <person name="Watanabe T."/>
            <person name="Sugiyama A."/>
            <person name="Takemoto M."/>
            <person name="Kawakami B."/>
            <person name="Yamazaki M."/>
            <person name="Watanabe K."/>
            <person name="Kumagai A."/>
            <person name="Itakura S."/>
            <person name="Fukuzumi Y."/>
            <person name="Fujimori Y."/>
            <person name="Komiyama M."/>
            <person name="Tashiro H."/>
            <person name="Tanigami A."/>
            <person name="Fujiwara T."/>
            <person name="Ono T."/>
            <person name="Yamada K."/>
            <person name="Fujii Y."/>
            <person name="Ozaki K."/>
            <person name="Hirao M."/>
            <person name="Ohmori Y."/>
            <person name="Kawabata A."/>
            <person name="Hikiji T."/>
            <person name="Kobatake N."/>
            <person name="Inagaki H."/>
            <person name="Ikema Y."/>
            <person name="Okamoto S."/>
            <person name="Okitani R."/>
            <person name="Kawakami T."/>
            <person name="Noguchi S."/>
            <person name="Itoh T."/>
            <person name="Shigeta K."/>
            <person name="Senba T."/>
            <person name="Matsumura K."/>
            <person name="Nakajima Y."/>
            <person name="Mizuno T."/>
            <person name="Morinaga M."/>
            <person name="Sasaki M."/>
            <person name="Togashi T."/>
            <person name="Oyama M."/>
            <person name="Hata H."/>
            <person name="Watanabe M."/>
            <person name="Komatsu T."/>
            <person name="Mizushima-Sugano J."/>
            <person name="Satoh T."/>
            <person name="Shirai Y."/>
            <person name="Takahashi Y."/>
            <person name="Nakagawa K."/>
            <person name="Okumura K."/>
            <person name="Nagase T."/>
            <person name="Nomura N."/>
            <person name="Kikuchi H."/>
            <person name="Masuho Y."/>
            <person name="Yamashita R."/>
            <person name="Nakai K."/>
            <person name="Yada T."/>
            <person name="Nakamura Y."/>
            <person name="Ohara O."/>
            <person name="Isogai T."/>
            <person name="Sugano S."/>
        </authorList>
    </citation>
    <scope>NUCLEOTIDE SEQUENCE [LARGE SCALE MRNA] (ISOFORM 3)</scope>
    <source>
        <tissue>Placenta</tissue>
    </source>
</reference>
<reference key="3">
    <citation type="journal article" date="2003" name="Nature">
        <title>The DNA sequence of human chromosome 7.</title>
        <authorList>
            <person name="Hillier L.W."/>
            <person name="Fulton R.S."/>
            <person name="Fulton L.A."/>
            <person name="Graves T.A."/>
            <person name="Pepin K.H."/>
            <person name="Wagner-McPherson C."/>
            <person name="Layman D."/>
            <person name="Maas J."/>
            <person name="Jaeger S."/>
            <person name="Walker R."/>
            <person name="Wylie K."/>
            <person name="Sekhon M."/>
            <person name="Becker M.C."/>
            <person name="O'Laughlin M.D."/>
            <person name="Schaller M.E."/>
            <person name="Fewell G.A."/>
            <person name="Delehaunty K.D."/>
            <person name="Miner T.L."/>
            <person name="Nash W.E."/>
            <person name="Cordes M."/>
            <person name="Du H."/>
            <person name="Sun H."/>
            <person name="Edwards J."/>
            <person name="Bradshaw-Cordum H."/>
            <person name="Ali J."/>
            <person name="Andrews S."/>
            <person name="Isak A."/>
            <person name="Vanbrunt A."/>
            <person name="Nguyen C."/>
            <person name="Du F."/>
            <person name="Lamar B."/>
            <person name="Courtney L."/>
            <person name="Kalicki J."/>
            <person name="Ozersky P."/>
            <person name="Bielicki L."/>
            <person name="Scott K."/>
            <person name="Holmes A."/>
            <person name="Harkins R."/>
            <person name="Harris A."/>
            <person name="Strong C.M."/>
            <person name="Hou S."/>
            <person name="Tomlinson C."/>
            <person name="Dauphin-Kohlberg S."/>
            <person name="Kozlowicz-Reilly A."/>
            <person name="Leonard S."/>
            <person name="Rohlfing T."/>
            <person name="Rock S.M."/>
            <person name="Tin-Wollam A.-M."/>
            <person name="Abbott A."/>
            <person name="Minx P."/>
            <person name="Maupin R."/>
            <person name="Strowmatt C."/>
            <person name="Latreille P."/>
            <person name="Miller N."/>
            <person name="Johnson D."/>
            <person name="Murray J."/>
            <person name="Woessner J.P."/>
            <person name="Wendl M.C."/>
            <person name="Yang S.-P."/>
            <person name="Schultz B.R."/>
            <person name="Wallis J.W."/>
            <person name="Spieth J."/>
            <person name="Bieri T.A."/>
            <person name="Nelson J.O."/>
            <person name="Berkowicz N."/>
            <person name="Wohldmann P.E."/>
            <person name="Cook L.L."/>
            <person name="Hickenbotham M.T."/>
            <person name="Eldred J."/>
            <person name="Williams D."/>
            <person name="Bedell J.A."/>
            <person name="Mardis E.R."/>
            <person name="Clifton S.W."/>
            <person name="Chissoe S.L."/>
            <person name="Marra M.A."/>
            <person name="Raymond C."/>
            <person name="Haugen E."/>
            <person name="Gillett W."/>
            <person name="Zhou Y."/>
            <person name="James R."/>
            <person name="Phelps K."/>
            <person name="Iadanoto S."/>
            <person name="Bubb K."/>
            <person name="Simms E."/>
            <person name="Levy R."/>
            <person name="Clendenning J."/>
            <person name="Kaul R."/>
            <person name="Kent W.J."/>
            <person name="Furey T.S."/>
            <person name="Baertsch R.A."/>
            <person name="Brent M.R."/>
            <person name="Keibler E."/>
            <person name="Flicek P."/>
            <person name="Bork P."/>
            <person name="Suyama M."/>
            <person name="Bailey J.A."/>
            <person name="Portnoy M.E."/>
            <person name="Torrents D."/>
            <person name="Chinwalla A.T."/>
            <person name="Gish W.R."/>
            <person name="Eddy S.R."/>
            <person name="McPherson J.D."/>
            <person name="Olson M.V."/>
            <person name="Eichler E.E."/>
            <person name="Green E.D."/>
            <person name="Waterston R.H."/>
            <person name="Wilson R.K."/>
        </authorList>
    </citation>
    <scope>NUCLEOTIDE SEQUENCE [LARGE SCALE GENOMIC DNA]</scope>
</reference>
<reference key="4">
    <citation type="journal article" date="2005" name="J. Biol. Chem.">
        <title>Endothelial nitric-oxide synthase antisense (NOS3AS) gene encodes an autophagy-related protein (APG9-like2) highly expressed in trophoblast.</title>
        <authorList>
            <person name="Yamada T."/>
            <person name="Carson A.R."/>
            <person name="Caniggia I."/>
            <person name="Umebayashi K."/>
            <person name="Yoshimori T."/>
            <person name="Nakabayashi K."/>
            <person name="Scherer S.W."/>
        </authorList>
    </citation>
    <scope>IDENTIFICATION</scope>
</reference>
<reference key="5">
    <citation type="journal article" date="2004" name="Genome Res.">
        <title>The status, quality, and expansion of the NIH full-length cDNA project: the Mammalian Gene Collection (MGC).</title>
        <authorList>
            <consortium name="The MGC Project Team"/>
        </authorList>
    </citation>
    <scope>NUCLEOTIDE SEQUENCE [LARGE SCALE MRNA] (ISOFORM 2)</scope>
</reference>
<reference key="6">
    <citation type="journal article" date="2007" name="J. Biol. Chem.">
        <title>Hypoxia-inducible expression of a natural cis-antisense transcript inhibits endothelial nitric-oxide synthase.</title>
        <authorList>
            <person name="Fish J.E."/>
            <person name="Matouk C.C."/>
            <person name="Yeboah E."/>
            <person name="Bevan S.C."/>
            <person name="Khan M."/>
            <person name="Patil K."/>
            <person name="Ohh M."/>
            <person name="Marsden P.A."/>
        </authorList>
    </citation>
    <scope>INDUCTION</scope>
</reference>
<reference key="7">
    <citation type="journal article" date="2009" name="Mol. Cell. Biol.">
        <title>Kinase-inactivated ULK proteins inhibit autophagy via their conserved C-terminal domains using an Atg13-independent mechanism.</title>
        <authorList>
            <person name="Chan E.Y.W."/>
            <person name="Longatti A."/>
            <person name="McKnight N.C."/>
            <person name="Tooze S.A."/>
        </authorList>
    </citation>
    <scope>SUBCELLULAR LOCATION</scope>
</reference>
<keyword id="KW-0002">3D-structure</keyword>
<keyword id="KW-0025">Alternative splicing</keyword>
<keyword id="KW-0072">Autophagy</keyword>
<keyword id="KW-0445">Lipid transport</keyword>
<keyword id="KW-0472">Membrane</keyword>
<keyword id="KW-1267">Proteomics identification</keyword>
<keyword id="KW-1185">Reference proteome</keyword>
<keyword id="KW-0812">Transmembrane</keyword>
<keyword id="KW-1133">Transmembrane helix</keyword>
<keyword id="KW-0813">Transport</keyword>
<organism>
    <name type="scientific">Homo sapiens</name>
    <name type="common">Human</name>
    <dbReference type="NCBI Taxonomy" id="9606"/>
    <lineage>
        <taxon>Eukaryota</taxon>
        <taxon>Metazoa</taxon>
        <taxon>Chordata</taxon>
        <taxon>Craniata</taxon>
        <taxon>Vertebrata</taxon>
        <taxon>Euteleostomi</taxon>
        <taxon>Mammalia</taxon>
        <taxon>Eutheria</taxon>
        <taxon>Euarchontoglires</taxon>
        <taxon>Primates</taxon>
        <taxon>Haplorrhini</taxon>
        <taxon>Catarrhini</taxon>
        <taxon>Hominidae</taxon>
        <taxon>Homo</taxon>
    </lineage>
</organism>
<gene>
    <name type="primary">ATG9B</name>
    <name evidence="11" type="synonym">APG9L2</name>
    <name evidence="9" type="synonym">NOS3AS</name>
</gene>
<name>ATG9B_HUMAN</name>
<comment type="function">
    <text evidence="1 2">Phospholipid scramblase involved in autophagy by mediating autophagosomal membrane expansion. Cycles between the preautophagosomal structure/phagophore assembly site (PAS) and the cytoplasmic vesicle pool and supplies membrane for the growing autophagosome. Lipid scramblase activity plays a key role in preautophagosomal structure/phagophore assembly by distributing the phospholipids that arrive through ATG2 (ATG2A or ATG2B) from the cytoplasmic to the luminal leaflet of the bilayer, thereby driving autophagosomal membrane expansion (By similarity). In addition to autophagy, also plays a role in necrotic cell death (By similarity).</text>
</comment>
<comment type="catalytic activity">
    <reaction evidence="2">
        <text>a 1,2-diacyl-sn-glycero-3-phosphocholine(in) = a 1,2-diacyl-sn-glycero-3-phosphocholine(out)</text>
        <dbReference type="Rhea" id="RHEA:38571"/>
        <dbReference type="ChEBI" id="CHEBI:57643"/>
    </reaction>
</comment>
<comment type="catalytic activity">
    <reaction evidence="2">
        <text>a 1,2-diacyl-sn-glycero-3-phospho-L-serine(in) = a 1,2-diacyl-sn-glycero-3-phospho-L-serine(out)</text>
        <dbReference type="Rhea" id="RHEA:38663"/>
        <dbReference type="ChEBI" id="CHEBI:57262"/>
    </reaction>
</comment>
<comment type="catalytic activity">
    <reaction evidence="2">
        <text>a 1,2-diacyl-sn-glycero-3-phosphoethanolamine(in) = a 1,2-diacyl-sn-glycero-3-phosphoethanolamine(out)</text>
        <dbReference type="Rhea" id="RHEA:38895"/>
        <dbReference type="ChEBI" id="CHEBI:64612"/>
    </reaction>
</comment>
<comment type="subunit">
    <text evidence="2">Homotrimer; forms a homotrimer with a central pore that forms a path between the two membrane leaflets.</text>
</comment>
<comment type="interaction">
    <interactant intactId="EBI-12837280">
        <id>Q674R7-2</id>
    </interactant>
    <interactant intactId="EBI-740785">
        <id>P49639</id>
        <label>HOXA1</label>
    </interactant>
    <organismsDiffer>false</organismsDiffer>
    <experiments>3</experiments>
</comment>
<comment type="interaction">
    <interactant intactId="EBI-12837280">
        <id>Q674R7-2</id>
    </interactant>
    <interactant intactId="EBI-740446">
        <id>P32242</id>
        <label>OTX1</label>
    </interactant>
    <organismsDiffer>false</organismsDiffer>
    <experiments>3</experiments>
</comment>
<comment type="subcellular location">
    <subcellularLocation>
        <location evidence="7">Preautophagosomal structure membrane</location>
        <topology evidence="7">Multi-pass membrane protein</topology>
    </subcellularLocation>
    <text evidence="7">Under amino acid starvation or rapamycin treatment, redistributes from a juxtanuclear clustered pool to a dispersed peripheral cytosolic pool (PubMed:18936157). The starvation-induced redistribution depends on ULK1 and ATG13 (PubMed:18936157).</text>
</comment>
<comment type="alternative products">
    <event type="alternative splicing"/>
    <isoform>
        <id>Q674R7-1</id>
        <name>1</name>
        <sequence type="displayed"/>
    </isoform>
    <isoform>
        <id>Q674R7-2</id>
        <name>2</name>
        <sequence type="described" ref="VSP_030410 VSP_030413"/>
    </isoform>
    <isoform>
        <id>Q674R7-3</id>
        <name>3</name>
        <sequence type="described" ref="VSP_030411 VSP_030412"/>
    </isoform>
</comment>
<comment type="tissue specificity">
    <text evidence="5">Highly expressed in placenta (trophoblast cells) and pituitary gland. Not expressed in vascular endothelial.</text>
</comment>
<comment type="induction">
    <text evidence="6">By hypoxia, leading to inhibit NOS3 expression.</text>
</comment>
<comment type="domain">
    <text evidence="2">Forms a homotrimer with a solvated central pore, which is connected laterally to the cytosol through the cavity within each protomer. Acts as a lipid scramblase that uses its central pore to function: the central pore opens laterally to accommodate lipid headgroups, thereby enabling lipid flipping and redistribution of lipids added to the outer leaflet of ATG9B-containing vesicles, thereby enabling growth into autophagosomes.</text>
</comment>
<comment type="domain">
    <text evidence="2">The tyrosine-based sorting signal motif, also named YXX-psi motif, promotes interaction with the AP-4 complex.</text>
</comment>
<comment type="miscellaneous">
    <text evidence="5">ATG9B gene is located on the opposite DNA strand of the NOS3 gene at chromosome 7q36. The genes are oriented in a tail-to-tail configuration and the mRNAs encoding ATG9B and NOS3 are complementary for 662 nucleotides. ATG9B transcription may a role in NOS3 transcription regulation.</text>
</comment>
<comment type="similarity">
    <text evidence="12">Belongs to the ATG9 family.</text>
</comment>
<comment type="sequence caution" evidence="12">
    <conflict type="erroneous initiation">
        <sequence resource="EMBL-CDS" id="AAQ86941"/>
    </conflict>
</comment>
<comment type="sequence caution" evidence="12">
    <conflict type="frameshift">
        <sequence resource="EMBL" id="AC010973"/>
    </conflict>
</comment>
<sequence length="924" mass="101019">MVSRMGWGGRRRRLGRWGDLGPGSVPLLPMPLPPPPPPSCRGPGGGRISIFSLSPAPHTRSSPSSFSPPTAGPPCSVLQGTGASQSCHSALPIPATPPTQAQPAMTPASASPSWGSHSTPPLAPATPTPSQQCPQDSPGLRVGPLIPEQDYERLEDCDPEGSQDSPIHGEEQQPLLHVPEGLRGSWHHIQNLDSFFTKIYSYHQRNGFACILLEDVFQLGQFIFIVTFTTFLLRCVDYNVLFANQPSNHTRPGPFHSKVTLSDAILPSAQCAERIRSSPLLVLLLVLAAGFWLVQLLRSVCNLFSYWDIQVFYREALHIPPEELSSVPWAEVQSRLLALQRSGGLCVQPRPLTELDIHHRILRYTNYQVALANKGLLPARCPLPWGGSAAFLSRGLALNVDLLLFRGPFSLFRGGWELPHAYKRSDQRGALAARWGRTVLLLAALNLALSPLVLAWQVLHVFYSHVELLRREPGALGARGWSRLARLQLRHFNELPHELRARLARAYRPAAAFLRTAAPPAPLRTLLARQLVFFAGALFAALLVLTVYDEDVLAVEHVLTAMTALGVTATVARSFIPEEQCQGRAPQLLLQTALAHMHYLPEEPGPGGRDRAYRQMAQLLQYRAVSLLEELLSPLLTPLFLLFWFRPRALEIIDFFHHFTVDVAGVGDICSFALMDVKRHGHPQWLSAGQTEASLSQRAEDGKTELSLMRFSLAHPLWRPPGHSSKFLGHLWGRVQQDAAAWGATSARGPSTPGVLSNCTSPLPEAFLANLFVHPLLPPRDLSPTAPCPAAATASLLASISRIAQDPSSVSPGGTGGQKLAQLPELASAEMSLHVIYLHQLHQQQQQQEPWGEAAASILSRPCSSPSQPPSPDEEKPSWSSDGSSPASSPRQQWGTQKARNLFPGGFQVTTDTQKEPDRASCTD</sequence>
<feature type="chain" id="PRO_0000314867" description="Autophagy-related protein 9B">
    <location>
        <begin position="1"/>
        <end position="924"/>
    </location>
</feature>
<feature type="topological domain" description="Cytoplasmic" evidence="12">
    <location>
        <begin position="1"/>
        <end position="207"/>
    </location>
</feature>
<feature type="transmembrane region" description="Helical" evidence="3">
    <location>
        <begin position="208"/>
        <end position="228"/>
    </location>
</feature>
<feature type="topological domain" description="Lumenal" evidence="12">
    <location>
        <begin position="229"/>
        <end position="276"/>
    </location>
</feature>
<feature type="transmembrane region" description="Helical" evidence="3">
    <location>
        <begin position="277"/>
        <end position="297"/>
    </location>
</feature>
<feature type="topological domain" description="Cytoplasmic" evidence="12">
    <location>
        <begin position="298"/>
        <end position="438"/>
    </location>
</feature>
<feature type="intramembrane region" evidence="2">
    <location>
        <begin position="439"/>
        <end position="459"/>
    </location>
</feature>
<feature type="topological domain" description="Cytoplasmic" evidence="12">
    <location>
        <begin position="460"/>
        <end position="526"/>
    </location>
</feature>
<feature type="transmembrane region" description="Helical" evidence="3">
    <location>
        <begin position="527"/>
        <end position="547"/>
    </location>
</feature>
<feature type="topological domain" description="Lumenal" evidence="12">
    <location>
        <begin position="548"/>
        <end position="551"/>
    </location>
</feature>
<feature type="transmembrane region" description="Helical" evidence="3">
    <location>
        <begin position="552"/>
        <end position="572"/>
    </location>
</feature>
<feature type="topological domain" description="Cytoplasmic" evidence="12">
    <location>
        <begin position="573"/>
        <end position="624"/>
    </location>
</feature>
<feature type="intramembrane region" evidence="2">
    <location>
        <begin position="625"/>
        <end position="645"/>
    </location>
</feature>
<feature type="topological domain" description="Cytoplasmic" evidence="12">
    <location>
        <begin position="646"/>
        <end position="924"/>
    </location>
</feature>
<feature type="region of interest" description="Disordered" evidence="4">
    <location>
        <begin position="1"/>
        <end position="144"/>
    </location>
</feature>
<feature type="region of interest" description="Disordered" evidence="4">
    <location>
        <begin position="847"/>
        <end position="924"/>
    </location>
</feature>
<feature type="short sequence motif" description="Tyrosine-based sorting signal" evidence="2">
    <location>
        <begin position="151"/>
        <end position="154"/>
    </location>
</feature>
<feature type="compositionally biased region" description="Low complexity" evidence="4">
    <location>
        <begin position="17"/>
        <end position="27"/>
    </location>
</feature>
<feature type="compositionally biased region" description="Pro residues" evidence="4">
    <location>
        <begin position="28"/>
        <end position="40"/>
    </location>
</feature>
<feature type="compositionally biased region" description="Polar residues" evidence="4">
    <location>
        <begin position="78"/>
        <end position="88"/>
    </location>
</feature>
<feature type="compositionally biased region" description="Low complexity" evidence="4">
    <location>
        <begin position="98"/>
        <end position="113"/>
    </location>
</feature>
<feature type="compositionally biased region" description="Low complexity" evidence="4">
    <location>
        <begin position="878"/>
        <end position="890"/>
    </location>
</feature>
<feature type="compositionally biased region" description="Basic and acidic residues" evidence="4">
    <location>
        <begin position="913"/>
        <end position="924"/>
    </location>
</feature>
<feature type="splice variant" id="VSP_030410" description="In isoform 2." evidence="10">
    <location>
        <begin position="1"/>
        <end position="514"/>
    </location>
</feature>
<feature type="splice variant" id="VSP_030411" description="In isoform 3." evidence="8">
    <original>EELSSVPWAEVQSRLLALQ</original>
    <variation>GKGREDTGMYWRGQPGGLD</variation>
    <location>
        <begin position="322"/>
        <end position="340"/>
    </location>
</feature>
<feature type="splice variant" id="VSP_030412" description="In isoform 3." evidence="8">
    <location>
        <begin position="341"/>
        <end position="924"/>
    </location>
</feature>
<feature type="splice variant" id="VSP_030413" description="In isoform 2." evidence="10">
    <original>RTAAPPAPLRTLLARQLVFFAGALFAALLVLTVYDEDVLAVEHVLTAMTALGVTATVA</original>
    <variation>MPSYPQPSVLRGSAPARCWSSSWSWLPASGWSNCFAQSATSSATGTSRCFTGRPCTSP</variation>
    <location>
        <begin position="515"/>
        <end position="572"/>
    </location>
</feature>
<feature type="sequence variant" id="VAR_061030" description="In dbSNP:rs61078191.">
    <original>P</original>
    <variation>L</variation>
    <location>
        <position position="166"/>
    </location>
</feature>
<feature type="sequence conflict" description="In Ref. 2; BAC04853." evidence="12" ref="2">
    <original>R</original>
    <variation>K</variation>
    <location>
        <position position="12"/>
    </location>
</feature>
<feature type="sequence conflict" description="In Ref. 1; AAQ86941." evidence="12" ref="1">
    <original>S</original>
    <variation>P</variation>
    <location>
        <position position="751"/>
    </location>
</feature>
<feature type="sequence conflict" description="In Ref. 1; AAQ86941." evidence="12" ref="1">
    <original>T</original>
    <variation>P</variation>
    <location>
        <position position="752"/>
    </location>
</feature>
<feature type="sequence conflict" description="In Ref. 1; AAQ86941." evidence="12" ref="1">
    <original>T</original>
    <variation>A</variation>
    <location>
        <position position="760"/>
    </location>
</feature>
<protein>
    <recommendedName>
        <fullName evidence="12">Autophagy-related protein 9B</fullName>
    </recommendedName>
    <alternativeName>
        <fullName evidence="11">APG9-like 2</fullName>
    </alternativeName>
    <alternativeName>
        <fullName evidence="9">Nitric oxide synthase 3-overlapping antisense gene protein</fullName>
        <shortName evidence="9">Protein sONE</shortName>
    </alternativeName>
</protein>
<accession>Q674R7</accession>
<accession>A1A5D3</accession>
<accession>Q6JRW5</accession>
<accession>Q8N8I8</accession>